<sequence length="231" mass="26527">MTFVDNFEFNQNTPRLVRGPFIILNSIIFSLSFILLCSTGIIIYYLNEYYLVKDLTIPLGSFILSAYMVITTIVGGIAIWKKKLGLHLTFMVFLVVLIVCLVGVSAKMIVDSGNPEKLQHKIENIWYKVGNYQHHSKHYHHGIIEIIEKHHRCCGWSKEIEGNYCVHFNRRESGHGYCAPYVEKSVESILKYLGYYGIVLSVIELILLILSGFFLLKTNKNVKSKSFILQD</sequence>
<comment type="subcellular location">
    <subcellularLocation>
        <location evidence="2">Membrane</location>
        <topology evidence="2">Multi-pass membrane protein</topology>
    </subcellularLocation>
</comment>
<comment type="similarity">
    <text evidence="2">Belongs to the tetraspanin (TM4SF) family.</text>
</comment>
<reference key="1">
    <citation type="journal article" date="2005" name="Nature">
        <title>The genome of the social amoeba Dictyostelium discoideum.</title>
        <authorList>
            <person name="Eichinger L."/>
            <person name="Pachebat J.A."/>
            <person name="Gloeckner G."/>
            <person name="Rajandream M.A."/>
            <person name="Sucgang R."/>
            <person name="Berriman M."/>
            <person name="Song J."/>
            <person name="Olsen R."/>
            <person name="Szafranski K."/>
            <person name="Xu Q."/>
            <person name="Tunggal B."/>
            <person name="Kummerfeld S."/>
            <person name="Madera M."/>
            <person name="Konfortov B.A."/>
            <person name="Rivero F."/>
            <person name="Bankier A.T."/>
            <person name="Lehmann R."/>
            <person name="Hamlin N."/>
            <person name="Davies R."/>
            <person name="Gaudet P."/>
            <person name="Fey P."/>
            <person name="Pilcher K."/>
            <person name="Chen G."/>
            <person name="Saunders D."/>
            <person name="Sodergren E.J."/>
            <person name="Davis P."/>
            <person name="Kerhornou A."/>
            <person name="Nie X."/>
            <person name="Hall N."/>
            <person name="Anjard C."/>
            <person name="Hemphill L."/>
            <person name="Bason N."/>
            <person name="Farbrother P."/>
            <person name="Desany B."/>
            <person name="Just E."/>
            <person name="Morio T."/>
            <person name="Rost R."/>
            <person name="Churcher C.M."/>
            <person name="Cooper J."/>
            <person name="Haydock S."/>
            <person name="van Driessche N."/>
            <person name="Cronin A."/>
            <person name="Goodhead I."/>
            <person name="Muzny D.M."/>
            <person name="Mourier T."/>
            <person name="Pain A."/>
            <person name="Lu M."/>
            <person name="Harper D."/>
            <person name="Lindsay R."/>
            <person name="Hauser H."/>
            <person name="James K.D."/>
            <person name="Quiles M."/>
            <person name="Madan Babu M."/>
            <person name="Saito T."/>
            <person name="Buchrieser C."/>
            <person name="Wardroper A."/>
            <person name="Felder M."/>
            <person name="Thangavelu M."/>
            <person name="Johnson D."/>
            <person name="Knights A."/>
            <person name="Loulseged H."/>
            <person name="Mungall K.L."/>
            <person name="Oliver K."/>
            <person name="Price C."/>
            <person name="Quail M.A."/>
            <person name="Urushihara H."/>
            <person name="Hernandez J."/>
            <person name="Rabbinowitsch E."/>
            <person name="Steffen D."/>
            <person name="Sanders M."/>
            <person name="Ma J."/>
            <person name="Kohara Y."/>
            <person name="Sharp S."/>
            <person name="Simmonds M.N."/>
            <person name="Spiegler S."/>
            <person name="Tivey A."/>
            <person name="Sugano S."/>
            <person name="White B."/>
            <person name="Walker D."/>
            <person name="Woodward J.R."/>
            <person name="Winckler T."/>
            <person name="Tanaka Y."/>
            <person name="Shaulsky G."/>
            <person name="Schleicher M."/>
            <person name="Weinstock G.M."/>
            <person name="Rosenthal A."/>
            <person name="Cox E.C."/>
            <person name="Chisholm R.L."/>
            <person name="Gibbs R.A."/>
            <person name="Loomis W.F."/>
            <person name="Platzer M."/>
            <person name="Kay R.R."/>
            <person name="Williams J.G."/>
            <person name="Dear P.H."/>
            <person name="Noegel A.A."/>
            <person name="Barrell B.G."/>
            <person name="Kuspa A."/>
        </authorList>
    </citation>
    <scope>NUCLEOTIDE SEQUENCE [LARGE SCALE GENOMIC DNA]</scope>
    <source>
        <strain>AX4</strain>
    </source>
</reference>
<keyword id="KW-0472">Membrane</keyword>
<keyword id="KW-1185">Reference proteome</keyword>
<keyword id="KW-0812">Transmembrane</keyword>
<keyword id="KW-1133">Transmembrane helix</keyword>
<dbReference type="EMBL" id="AAFI02000175">
    <property type="protein sequence ID" value="EAL61872.1"/>
    <property type="molecule type" value="Genomic_DNA"/>
</dbReference>
<dbReference type="RefSeq" id="XP_635382.1">
    <property type="nucleotide sequence ID" value="XM_630290.1"/>
</dbReference>
<dbReference type="SMR" id="Q54F08"/>
<dbReference type="STRING" id="44689.Q54F08"/>
<dbReference type="PaxDb" id="44689-DDB0252568"/>
<dbReference type="EnsemblProtists" id="EAL61872">
    <property type="protein sequence ID" value="EAL61872"/>
    <property type="gene ID" value="DDB_G0291177"/>
</dbReference>
<dbReference type="GeneID" id="8628030"/>
<dbReference type="KEGG" id="ddi:DDB_G0291177"/>
<dbReference type="dictyBase" id="DDB_G0291177">
    <property type="gene designation" value="tspE"/>
</dbReference>
<dbReference type="VEuPathDB" id="AmoebaDB:DDB_G0291177"/>
<dbReference type="eggNOG" id="ENOG502R8AE">
    <property type="taxonomic scope" value="Eukaryota"/>
</dbReference>
<dbReference type="HOGENOM" id="CLU_1201726_0_0_1"/>
<dbReference type="InParanoid" id="Q54F08"/>
<dbReference type="OMA" id="YMVITTI"/>
<dbReference type="PRO" id="PR:Q54F08"/>
<dbReference type="Proteomes" id="UP000002195">
    <property type="component" value="Chromosome 5"/>
</dbReference>
<dbReference type="GO" id="GO:0016020">
    <property type="term" value="C:membrane"/>
    <property type="evidence" value="ECO:0007669"/>
    <property type="project" value="UniProtKB-SubCell"/>
</dbReference>
<dbReference type="InterPro" id="IPR018499">
    <property type="entry name" value="Tetraspanin/Peripherin"/>
</dbReference>
<dbReference type="Pfam" id="PF00335">
    <property type="entry name" value="Tetraspanin"/>
    <property type="match status" value="1"/>
</dbReference>
<gene>
    <name type="primary">tspE</name>
    <name type="ORF">DDB_G0291177</name>
</gene>
<evidence type="ECO:0000255" key="1"/>
<evidence type="ECO:0000305" key="2"/>
<accession>Q54F08</accession>
<protein>
    <recommendedName>
        <fullName>Probable tetraspanin tspE</fullName>
    </recommendedName>
</protein>
<organism>
    <name type="scientific">Dictyostelium discoideum</name>
    <name type="common">Social amoeba</name>
    <dbReference type="NCBI Taxonomy" id="44689"/>
    <lineage>
        <taxon>Eukaryota</taxon>
        <taxon>Amoebozoa</taxon>
        <taxon>Evosea</taxon>
        <taxon>Eumycetozoa</taxon>
        <taxon>Dictyostelia</taxon>
        <taxon>Dictyosteliales</taxon>
        <taxon>Dictyosteliaceae</taxon>
        <taxon>Dictyostelium</taxon>
    </lineage>
</organism>
<proteinExistence type="inferred from homology"/>
<feature type="chain" id="PRO_0000315600" description="Probable tetraspanin tspE">
    <location>
        <begin position="1"/>
        <end position="231"/>
    </location>
</feature>
<feature type="topological domain" description="Cytoplasmic" evidence="1">
    <location>
        <begin position="1"/>
        <end position="21"/>
    </location>
</feature>
<feature type="transmembrane region" description="Helical" evidence="1">
    <location>
        <begin position="22"/>
        <end position="42"/>
    </location>
</feature>
<feature type="topological domain" description="Extracellular" evidence="1">
    <location>
        <begin position="43"/>
        <end position="58"/>
    </location>
</feature>
<feature type="transmembrane region" description="Helical" evidence="1">
    <location>
        <begin position="59"/>
        <end position="79"/>
    </location>
</feature>
<feature type="topological domain" description="Cytoplasmic" evidence="1">
    <location>
        <begin position="80"/>
        <end position="83"/>
    </location>
</feature>
<feature type="transmembrane region" description="Helical" evidence="1">
    <location>
        <begin position="84"/>
        <end position="104"/>
    </location>
</feature>
<feature type="topological domain" description="Extracellular" evidence="1">
    <location>
        <begin position="105"/>
        <end position="195"/>
    </location>
</feature>
<feature type="transmembrane region" description="Helical" evidence="1">
    <location>
        <begin position="196"/>
        <end position="216"/>
    </location>
</feature>
<feature type="topological domain" description="Cytoplasmic" evidence="1">
    <location>
        <begin position="217"/>
        <end position="231"/>
    </location>
</feature>
<name>TSPE_DICDI</name>